<keyword id="KW-0268">Exocytosis</keyword>
<keyword id="KW-0653">Protein transport</keyword>
<keyword id="KW-1185">Reference proteome</keyword>
<keyword id="KW-0813">Transport</keyword>
<reference key="1">
    <citation type="journal article" date="1998" name="Science">
        <title>Genome sequence of the nematode C. elegans: a platform for investigating biology.</title>
        <authorList>
            <consortium name="The C. elegans sequencing consortium"/>
        </authorList>
    </citation>
    <scope>NUCLEOTIDE SEQUENCE [LARGE SCALE GENOMIC DNA]</scope>
    <source>
        <strain>Bristol N2</strain>
    </source>
</reference>
<reference key="2">
    <citation type="journal article" date="2001" name="Genetics">
        <title>Genetic analysis of endocytosis in Caenorhabditis elegans: coelomocyte uptake defective mutants.</title>
        <authorList>
            <person name="Fares H."/>
            <person name="Greenwald I."/>
        </authorList>
    </citation>
    <scope>IDENTIFICATION</scope>
</reference>
<organism>
    <name type="scientific">Caenorhabditis elegans</name>
    <dbReference type="NCBI Taxonomy" id="6239"/>
    <lineage>
        <taxon>Eukaryota</taxon>
        <taxon>Metazoa</taxon>
        <taxon>Ecdysozoa</taxon>
        <taxon>Nematoda</taxon>
        <taxon>Chromadorea</taxon>
        <taxon>Rhabditida</taxon>
        <taxon>Rhabditina</taxon>
        <taxon>Rhabditomorpha</taxon>
        <taxon>Rhabditoidea</taxon>
        <taxon>Rhabditidae</taxon>
        <taxon>Peloderinae</taxon>
        <taxon>Caenorhabditis</taxon>
    </lineage>
</organism>
<gene>
    <name type="primary">sec-8</name>
    <name type="ORF">Y106G6H.7</name>
</gene>
<protein>
    <recommendedName>
        <fullName>Exocyst complex component 4</fullName>
    </recommendedName>
    <alternativeName>
        <fullName>Exocyst complex component Sec8</fullName>
    </alternativeName>
</protein>
<dbReference type="EMBL" id="AL032631">
    <property type="protein sequence ID" value="CAA21575.2"/>
    <property type="molecule type" value="Genomic_DNA"/>
</dbReference>
<dbReference type="PIR" id="T26430">
    <property type="entry name" value="T26430"/>
</dbReference>
<dbReference type="RefSeq" id="NP_492732.2">
    <property type="nucleotide sequence ID" value="NM_060331.5"/>
</dbReference>
<dbReference type="SMR" id="Q9XWS2"/>
<dbReference type="BioGRID" id="38340">
    <property type="interactions" value="5"/>
</dbReference>
<dbReference type="ComplexPortal" id="CPX-712">
    <property type="entry name" value="Exocyst"/>
</dbReference>
<dbReference type="FunCoup" id="Q9XWS2">
    <property type="interactions" value="2917"/>
</dbReference>
<dbReference type="STRING" id="6239.Y106G6H.7.1"/>
<dbReference type="PaxDb" id="6239-Y106G6H.7"/>
<dbReference type="PeptideAtlas" id="Q9XWS2"/>
<dbReference type="EnsemblMetazoa" id="Y106G6H.7.1">
    <property type="protein sequence ID" value="Y106G6H.7.1"/>
    <property type="gene ID" value="WBGene00004753"/>
</dbReference>
<dbReference type="GeneID" id="172924"/>
<dbReference type="KEGG" id="cel:CELE_Y106G6H.7"/>
<dbReference type="UCSC" id="Y106G6H.7">
    <property type="organism name" value="c. elegans"/>
</dbReference>
<dbReference type="AGR" id="WB:WBGene00004753"/>
<dbReference type="CTD" id="172924"/>
<dbReference type="WormBase" id="Y106G6H.7">
    <property type="protein sequence ID" value="CE32512"/>
    <property type="gene ID" value="WBGene00004753"/>
    <property type="gene designation" value="sec-8"/>
</dbReference>
<dbReference type="eggNOG" id="KOG3691">
    <property type="taxonomic scope" value="Eukaryota"/>
</dbReference>
<dbReference type="GeneTree" id="ENSGT00390000001439"/>
<dbReference type="HOGENOM" id="CLU_012416_0_0_1"/>
<dbReference type="InParanoid" id="Q9XWS2"/>
<dbReference type="OMA" id="HMEVRCR"/>
<dbReference type="OrthoDB" id="272977at2759"/>
<dbReference type="PhylomeDB" id="Q9XWS2"/>
<dbReference type="Reactome" id="R-CEL-264876">
    <property type="pathway name" value="Insulin processing"/>
</dbReference>
<dbReference type="Reactome" id="R-CEL-5620916">
    <property type="pathway name" value="VxPx cargo-targeting to cilium"/>
</dbReference>
<dbReference type="PRO" id="PR:Q9XWS2"/>
<dbReference type="Proteomes" id="UP000001940">
    <property type="component" value="Chromosome I"/>
</dbReference>
<dbReference type="Bgee" id="WBGene00004753">
    <property type="expression patterns" value="Expressed in germ line (C elegans) and 4 other cell types or tissues"/>
</dbReference>
<dbReference type="GO" id="GO:0000145">
    <property type="term" value="C:exocyst"/>
    <property type="evidence" value="ECO:0000250"/>
    <property type="project" value="WormBase"/>
</dbReference>
<dbReference type="GO" id="GO:0032584">
    <property type="term" value="C:growth cone membrane"/>
    <property type="evidence" value="ECO:0000318"/>
    <property type="project" value="GO_Central"/>
</dbReference>
<dbReference type="GO" id="GO:0045202">
    <property type="term" value="C:synapse"/>
    <property type="evidence" value="ECO:0000318"/>
    <property type="project" value="GO_Central"/>
</dbReference>
<dbReference type="GO" id="GO:0007268">
    <property type="term" value="P:chemical synaptic transmission"/>
    <property type="evidence" value="ECO:0000318"/>
    <property type="project" value="GO_Central"/>
</dbReference>
<dbReference type="GO" id="GO:0006887">
    <property type="term" value="P:exocytosis"/>
    <property type="evidence" value="ECO:0000318"/>
    <property type="project" value="GO_Central"/>
</dbReference>
<dbReference type="GO" id="GO:0006893">
    <property type="term" value="P:Golgi to plasma membrane transport"/>
    <property type="evidence" value="ECO:0000318"/>
    <property type="project" value="GO_Central"/>
</dbReference>
<dbReference type="GO" id="GO:0015031">
    <property type="term" value="P:protein transport"/>
    <property type="evidence" value="ECO:0007669"/>
    <property type="project" value="UniProtKB-KW"/>
</dbReference>
<dbReference type="GO" id="GO:0006904">
    <property type="term" value="P:vesicle docking involved in exocytosis"/>
    <property type="evidence" value="ECO:0007669"/>
    <property type="project" value="InterPro"/>
</dbReference>
<dbReference type="GO" id="GO:0090522">
    <property type="term" value="P:vesicle tethering involved in exocytosis"/>
    <property type="evidence" value="ECO:0000315"/>
    <property type="project" value="ComplexPortal"/>
</dbReference>
<dbReference type="InterPro" id="IPR039682">
    <property type="entry name" value="Sec8/EXOC4"/>
</dbReference>
<dbReference type="InterPro" id="IPR007191">
    <property type="entry name" value="Sec8_exocyst_N"/>
</dbReference>
<dbReference type="PANTHER" id="PTHR14146">
    <property type="entry name" value="EXOCYST COMPLEX COMPONENT 4"/>
    <property type="match status" value="1"/>
</dbReference>
<dbReference type="PANTHER" id="PTHR14146:SF0">
    <property type="entry name" value="EXOCYST COMPLEX COMPONENT 4"/>
    <property type="match status" value="1"/>
</dbReference>
<dbReference type="Pfam" id="PF04048">
    <property type="entry name" value="Sec8_N"/>
    <property type="match status" value="1"/>
</dbReference>
<proteinExistence type="evidence at transcript level"/>
<evidence type="ECO:0000250" key="1">
    <source>
        <dbReference type="UniProtKB" id="Q62824"/>
    </source>
</evidence>
<evidence type="ECO:0000256" key="2">
    <source>
        <dbReference type="SAM" id="MobiDB-lite"/>
    </source>
</evidence>
<evidence type="ECO:0000305" key="3"/>
<name>EXOC4_CAEEL</name>
<accession>Q9XWS2</accession>
<feature type="chain" id="PRO_0000118937" description="Exocyst complex component 4">
    <location>
        <begin position="1"/>
        <end position="893"/>
    </location>
</feature>
<feature type="region of interest" description="Disordered" evidence="2">
    <location>
        <begin position="1"/>
        <end position="27"/>
    </location>
</feature>
<sequence>MNENGATPVAAARRHRPLPAERATSNSNETGLLINVIRSLTSSVSEDQREVEKSRLEKGYKESGALIDRLVKNHQQDVEKCLVSFRDVSSKISNCRERIHNVRNALHTVKSLLELRRDDLKKLWHENAQQKSVCEIMAKLEELREAPSKIENLISKEQYQQAADTVTESRELINGRLSRVEGLSHLSAEIERFTKILIDKINDTLVNMLVVEPFEKHLLHIVRTIPEHRINQNAYCHSLSTKSRSGSGSVSSFSDVSAKSRIVSSVEALSTLFRTVEERHWDVDRLMMLGKNMIDKMIVNTVQVMKIGANIDESNEGDTTHLKQLMQLLSAQFDSASQQHAEFGVLVEKQLGRKDVVTSFWRSAQSAIEVVVSEHLDINPLLEKQNVLGTASRKQLFRFENTACATPNANSSSHRTKAVICKPSAYNIKVIFPILSRLMETTEKNINDSPCELRRFMHSFVMEVFVERVKGELASRIEGALRGGEAVRVSTNKKILPSCEKVLNLCKEVQDLIVSIDLYADRFAALWLLVLTDYFKNMTDVYDRMTPKNPDPSLPNSEALPTRRQKISAAWTADDDISRLLMSLPNWHAASISPMTPAVESELDVGERNKRESEILIGNLGTQAQNSLSESDLITDMNDIKMFASLHESLRWFSDEIRELVHSLPANVKMMLDTCMVQVRLKDGQMIDNNSVPSAIEDCVRRLESIADSCLLLLHIEIRVHCFFHLAPLAKYRNTSSHNEVDPEVVALGKDLHQFHDNLKDVLSPAKLSYVFDGLGHLCASLFIHYSQFMPRLTEAAKKRVCRNVWGVQQRLSRITNRRESDLDRARAFFDLLLDNTPDGILAIVPEKRSQFTATELNYLLALSVRSDKTLASQPGALEKRQMVLNSILNQKK</sequence>
<comment type="function">
    <text evidence="1">Component of the exocyst complex involved in the docking of exocytic vesicles with fusion sites on the plasma membrane.</text>
</comment>
<comment type="subunit">
    <text evidence="1">The exocyst complex is composed of sec-3/exoc1, sec-5/exoc2, sec-6/exoc3, sec-8/exoc4, sec-10/exoc5, sec-15/exoc6, exo-70/exoc7 and exo-84/exoc8.</text>
</comment>
<comment type="tissue specificity">
    <text>Pseudocoelom.</text>
</comment>
<comment type="similarity">
    <text evidence="3">Belongs to the SEC8 family.</text>
</comment>